<protein>
    <recommendedName>
        <fullName evidence="1">UPF0250 protein PD_0532</fullName>
    </recommendedName>
</protein>
<feature type="chain" id="PRO_0000209321" description="UPF0250 protein PD_0532">
    <location>
        <begin position="1"/>
        <end position="92"/>
    </location>
</feature>
<keyword id="KW-1185">Reference proteome</keyword>
<sequence length="92" mass="10435">MEIKSDHSEHGFQFPGTFELSVVGTAGKALETELPRLLALCGVELVQERISWKHSSTGKYVSVRIGFRALDREQYDAAHQVLRDHPEVKWTL</sequence>
<evidence type="ECO:0000255" key="1">
    <source>
        <dbReference type="HAMAP-Rule" id="MF_00659"/>
    </source>
</evidence>
<accession>Q87DZ7</accession>
<comment type="similarity">
    <text evidence="1">Belongs to the UPF0250 family.</text>
</comment>
<gene>
    <name type="ordered locus">PD_0532</name>
</gene>
<name>Y532_XYLFT</name>
<reference key="1">
    <citation type="journal article" date="2003" name="J. Bacteriol.">
        <title>Comparative analyses of the complete genome sequences of Pierce's disease and citrus variegated chlorosis strains of Xylella fastidiosa.</title>
        <authorList>
            <person name="Van Sluys M.A."/>
            <person name="de Oliveira M.C."/>
            <person name="Monteiro-Vitorello C.B."/>
            <person name="Miyaki C.Y."/>
            <person name="Furlan L.R."/>
            <person name="Camargo L.E.A."/>
            <person name="da Silva A.C.R."/>
            <person name="Moon D.H."/>
            <person name="Takita M.A."/>
            <person name="Lemos E.G.M."/>
            <person name="Machado M.A."/>
            <person name="Ferro M.I.T."/>
            <person name="da Silva F.R."/>
            <person name="Goldman M.H.S."/>
            <person name="Goldman G.H."/>
            <person name="Lemos M.V.F."/>
            <person name="El-Dorry H."/>
            <person name="Tsai S.M."/>
            <person name="Carrer H."/>
            <person name="Carraro D.M."/>
            <person name="de Oliveira R.C."/>
            <person name="Nunes L.R."/>
            <person name="Siqueira W.J."/>
            <person name="Coutinho L.L."/>
            <person name="Kimura E.T."/>
            <person name="Ferro E.S."/>
            <person name="Harakava R."/>
            <person name="Kuramae E.E."/>
            <person name="Marino C.L."/>
            <person name="Giglioti E."/>
            <person name="Abreu I.L."/>
            <person name="Alves L.M.C."/>
            <person name="do Amaral A.M."/>
            <person name="Baia G.S."/>
            <person name="Blanco S.R."/>
            <person name="Brito M.S."/>
            <person name="Cannavan F.S."/>
            <person name="Celestino A.V."/>
            <person name="da Cunha A.F."/>
            <person name="Fenille R.C."/>
            <person name="Ferro J.A."/>
            <person name="Formighieri E.F."/>
            <person name="Kishi L.T."/>
            <person name="Leoni S.G."/>
            <person name="Oliveira A.R."/>
            <person name="Rosa V.E. Jr."/>
            <person name="Sassaki F.T."/>
            <person name="Sena J.A.D."/>
            <person name="de Souza A.A."/>
            <person name="Truffi D."/>
            <person name="Tsukumo F."/>
            <person name="Yanai G.M."/>
            <person name="Zaros L.G."/>
            <person name="Civerolo E.L."/>
            <person name="Simpson A.J.G."/>
            <person name="Almeida N.F. Jr."/>
            <person name="Setubal J.C."/>
            <person name="Kitajima J.P."/>
        </authorList>
    </citation>
    <scope>NUCLEOTIDE SEQUENCE [LARGE SCALE GENOMIC DNA]</scope>
    <source>
        <strain>Temecula1 / ATCC 700964</strain>
    </source>
</reference>
<dbReference type="EMBL" id="AE009442">
    <property type="protein sequence ID" value="AAO28405.1"/>
    <property type="molecule type" value="Genomic_DNA"/>
</dbReference>
<dbReference type="RefSeq" id="WP_004090541.1">
    <property type="nucleotide sequence ID" value="NC_004556.1"/>
</dbReference>
<dbReference type="SMR" id="Q87DZ7"/>
<dbReference type="KEGG" id="xft:PD_0532"/>
<dbReference type="HOGENOM" id="CLU_161438_1_1_6"/>
<dbReference type="Proteomes" id="UP000002516">
    <property type="component" value="Chromosome"/>
</dbReference>
<dbReference type="Gene3D" id="3.30.70.260">
    <property type="match status" value="1"/>
</dbReference>
<dbReference type="HAMAP" id="MF_00659">
    <property type="entry name" value="UPF0250"/>
    <property type="match status" value="1"/>
</dbReference>
<dbReference type="InterPro" id="IPR007454">
    <property type="entry name" value="UPF0250_YbeD-like"/>
</dbReference>
<dbReference type="InterPro" id="IPR027471">
    <property type="entry name" value="YbeD-like_sf"/>
</dbReference>
<dbReference type="NCBIfam" id="NF002066">
    <property type="entry name" value="PRK00907.1"/>
    <property type="match status" value="1"/>
</dbReference>
<dbReference type="Pfam" id="PF04359">
    <property type="entry name" value="DUF493"/>
    <property type="match status" value="1"/>
</dbReference>
<dbReference type="SUPFAM" id="SSF117991">
    <property type="entry name" value="YbeD/HP0495-like"/>
    <property type="match status" value="1"/>
</dbReference>
<organism>
    <name type="scientific">Xylella fastidiosa (strain Temecula1 / ATCC 700964)</name>
    <dbReference type="NCBI Taxonomy" id="183190"/>
    <lineage>
        <taxon>Bacteria</taxon>
        <taxon>Pseudomonadati</taxon>
        <taxon>Pseudomonadota</taxon>
        <taxon>Gammaproteobacteria</taxon>
        <taxon>Lysobacterales</taxon>
        <taxon>Lysobacteraceae</taxon>
        <taxon>Xylella</taxon>
    </lineage>
</organism>
<proteinExistence type="inferred from homology"/>